<sequence length="1084" mass="119348">MAGNEWINGYLEAILDSGGAAGGGGGGGGGGGGGGGGGGGGGGGGVDPRSPAAGAASPRGPHMNFNPTHYFVEEVVKGVDESDLHRTWIKVVATRNARERSTRLENMCWRIWHLARKKKQLELEGILRISARRKEQEQVRRETSEDLAEDLFEGEKADTVGELAQQDTPMKKKFQRNFSELTVSWSDENKEKKLYIVLISLHGLVRGDNMELGRDSDTGGQVKYVVELARALAMMPGVYRVDLFTRQVSSPEVDWSYGEPTEMLTSGSTDGEGSGESAGAYIVRIPCGPRDKYLRKEALWPYLQEFVDGALAHILNMSKALGEQVSNGKLVLPYVIHGHYADAGDVAALLSGALNVPMVLTGHSLGRNKLEQIMKQGRMSKEEIDSTYKIMRRIEGEELALDAAELVITSTRQEIDEQWGLYDGFDVKLEKVLRARARRGVSCHGRFMPRMVVIPPGMDFSSVVVPEDTSDGDDGKDFEIASPRSLPPIWAEVMRFLTNPHKPMILALSRPDPKKNITTLVKAFGECRPLRELANLILIMGNRDDIDEMSAGNASVLTTVLKLIDKYDLYGSVAFPKHHKQSDVPEIYRLTGKMKGVFINPALVEPFGLTLIEAAAHGLPIVATKNGGPVDIKNALNNGLLVDPHDQHAIADALLKLVADKNLWQECRKNGLRNIQLYSWPEHCRTYLTRIAGCRIRNPRWLMDTPADAAAEEEEALEDSLMDVQDLSLRLSIDGERGSSMNDAPSSDPQDSVQRIMNKIKRSSPADTDGAKIPAEAAATATSGAMNKYPLLRRRRRLFVIAVDCYGDDGSASKRMLQVIQEVFRAVRSDSQMSRISGFALSTAMPLPETLKLLQLGKIPPTDFDALICGSGSEVYYPSTAQCVDAGGRLRPDQDYLLHINHRWSHDGAKQTIAKLAHDGSGTNVEPDVESCNPHCVSFFIKDPNKVRTIDEMRERVRMRGLRCHLMYCRNATRLQVVPLLASRSQALRYLFVRWGLSVGNMYLIVGEHGDTDHEEMLSGLHKTVIIRGVTEKGSEQLVRSSGSYQREDVVPSESPLIAFTKGDLKADEIMRALKEVTKAASGM</sequence>
<name>SPSA1_ORYSI</name>
<protein>
    <recommendedName>
        <fullName>Probable sucrose-phosphate synthase 1</fullName>
        <ecNumber>2.4.1.14</ecNumber>
    </recommendedName>
    <alternativeName>
        <fullName>UDP-glucose-fructose-phosphate glucosyltransferase</fullName>
    </alternativeName>
</protein>
<reference key="1">
    <citation type="journal article" date="1996" name="Gene">
        <title>Characterization of a rice sucrose-phosphate synthase-encoding gene.</title>
        <authorList>
            <person name="Valdez-Alarcon J.J."/>
            <person name="Ferrando M."/>
            <person name="Jimenez-Moraila B."/>
            <person name="Herrera-Estrella L."/>
        </authorList>
    </citation>
    <scope>NUCLEOTIDE SEQUENCE [GENOMIC DNA]</scope>
    <scope>TISSUE SPECIFICITY</scope>
    <source>
        <strain>cv. IR36</strain>
        <tissue>Leaf</tissue>
    </source>
</reference>
<reference key="2">
    <citation type="journal article" date="2005" name="PLoS Biol.">
        <title>The genomes of Oryza sativa: a history of duplications.</title>
        <authorList>
            <person name="Yu J."/>
            <person name="Wang J."/>
            <person name="Lin W."/>
            <person name="Li S."/>
            <person name="Li H."/>
            <person name="Zhou J."/>
            <person name="Ni P."/>
            <person name="Dong W."/>
            <person name="Hu S."/>
            <person name="Zeng C."/>
            <person name="Zhang J."/>
            <person name="Zhang Y."/>
            <person name="Li R."/>
            <person name="Xu Z."/>
            <person name="Li S."/>
            <person name="Li X."/>
            <person name="Zheng H."/>
            <person name="Cong L."/>
            <person name="Lin L."/>
            <person name="Yin J."/>
            <person name="Geng J."/>
            <person name="Li G."/>
            <person name="Shi J."/>
            <person name="Liu J."/>
            <person name="Lv H."/>
            <person name="Li J."/>
            <person name="Wang J."/>
            <person name="Deng Y."/>
            <person name="Ran L."/>
            <person name="Shi X."/>
            <person name="Wang X."/>
            <person name="Wu Q."/>
            <person name="Li C."/>
            <person name="Ren X."/>
            <person name="Wang J."/>
            <person name="Wang X."/>
            <person name="Li D."/>
            <person name="Liu D."/>
            <person name="Zhang X."/>
            <person name="Ji Z."/>
            <person name="Zhao W."/>
            <person name="Sun Y."/>
            <person name="Zhang Z."/>
            <person name="Bao J."/>
            <person name="Han Y."/>
            <person name="Dong L."/>
            <person name="Ji J."/>
            <person name="Chen P."/>
            <person name="Wu S."/>
            <person name="Liu J."/>
            <person name="Xiao Y."/>
            <person name="Bu D."/>
            <person name="Tan J."/>
            <person name="Yang L."/>
            <person name="Ye C."/>
            <person name="Zhang J."/>
            <person name="Xu J."/>
            <person name="Zhou Y."/>
            <person name="Yu Y."/>
            <person name="Zhang B."/>
            <person name="Zhuang S."/>
            <person name="Wei H."/>
            <person name="Liu B."/>
            <person name="Lei M."/>
            <person name="Yu H."/>
            <person name="Li Y."/>
            <person name="Xu H."/>
            <person name="Wei S."/>
            <person name="He X."/>
            <person name="Fang L."/>
            <person name="Zhang Z."/>
            <person name="Zhang Y."/>
            <person name="Huang X."/>
            <person name="Su Z."/>
            <person name="Tong W."/>
            <person name="Li J."/>
            <person name="Tong Z."/>
            <person name="Li S."/>
            <person name="Ye J."/>
            <person name="Wang L."/>
            <person name="Fang L."/>
            <person name="Lei T."/>
            <person name="Chen C.-S."/>
            <person name="Chen H.-C."/>
            <person name="Xu Z."/>
            <person name="Li H."/>
            <person name="Huang H."/>
            <person name="Zhang F."/>
            <person name="Xu H."/>
            <person name="Li N."/>
            <person name="Zhao C."/>
            <person name="Li S."/>
            <person name="Dong L."/>
            <person name="Huang Y."/>
            <person name="Li L."/>
            <person name="Xi Y."/>
            <person name="Qi Q."/>
            <person name="Li W."/>
            <person name="Zhang B."/>
            <person name="Hu W."/>
            <person name="Zhang Y."/>
            <person name="Tian X."/>
            <person name="Jiao Y."/>
            <person name="Liang X."/>
            <person name="Jin J."/>
            <person name="Gao L."/>
            <person name="Zheng W."/>
            <person name="Hao B."/>
            <person name="Liu S.-M."/>
            <person name="Wang W."/>
            <person name="Yuan L."/>
            <person name="Cao M."/>
            <person name="McDermott J."/>
            <person name="Samudrala R."/>
            <person name="Wang J."/>
            <person name="Wong G.K.-S."/>
            <person name="Yang H."/>
        </authorList>
    </citation>
    <scope>NUCLEOTIDE SEQUENCE [LARGE SCALE GENOMIC DNA]</scope>
    <source>
        <strain>cv. 93-11</strain>
    </source>
</reference>
<reference key="3">
    <citation type="journal article" date="2000" name="Plant Physiol.">
        <title>Tissue-specific and developmental pattern of expression of the rice sps1 gene.</title>
        <authorList>
            <person name="Chavez-Barcenas A.T."/>
            <person name="Valdez-Alarcon J.J."/>
            <person name="Martinez-Trujillo M."/>
            <person name="Chen L."/>
            <person name="Xoconostle-Cazares B."/>
            <person name="Lucas W.J."/>
            <person name="Herrera-Estrella L."/>
        </authorList>
    </citation>
    <scope>TISSUE SPECIFICITY</scope>
</reference>
<proteinExistence type="evidence at transcript level"/>
<evidence type="ECO:0000250" key="1"/>
<evidence type="ECO:0000256" key="2">
    <source>
        <dbReference type="SAM" id="MobiDB-lite"/>
    </source>
</evidence>
<evidence type="ECO:0000269" key="3">
    <source>
    </source>
</evidence>
<evidence type="ECO:0000269" key="4">
    <source>
    </source>
</evidence>
<evidence type="ECO:0000305" key="5"/>
<organism>
    <name type="scientific">Oryza sativa subsp. indica</name>
    <name type="common">Rice</name>
    <dbReference type="NCBI Taxonomy" id="39946"/>
    <lineage>
        <taxon>Eukaryota</taxon>
        <taxon>Viridiplantae</taxon>
        <taxon>Streptophyta</taxon>
        <taxon>Embryophyta</taxon>
        <taxon>Tracheophyta</taxon>
        <taxon>Spermatophyta</taxon>
        <taxon>Magnoliopsida</taxon>
        <taxon>Liliopsida</taxon>
        <taxon>Poales</taxon>
        <taxon>Poaceae</taxon>
        <taxon>BOP clade</taxon>
        <taxon>Oryzoideae</taxon>
        <taxon>Oryzeae</taxon>
        <taxon>Oryzinae</taxon>
        <taxon>Oryza</taxon>
        <taxon>Oryza sativa</taxon>
    </lineage>
</organism>
<gene>
    <name type="primary">SPS1</name>
    <name type="ORF">OsI_004842</name>
</gene>
<accession>A2WYE9</accession>
<accession>Q43010</accession>
<accession>Q43802</accession>
<accession>Q5JLN3</accession>
<accession>Q94JN0</accession>
<feature type="chain" id="PRO_0000303664" description="Probable sucrose-phosphate synthase 1">
    <location>
        <begin position="1"/>
        <end position="1084"/>
    </location>
</feature>
<feature type="region of interest" description="Disordered" evidence="2">
    <location>
        <begin position="25"/>
        <end position="61"/>
    </location>
</feature>
<feature type="compositionally biased region" description="Gly residues" evidence="2">
    <location>
        <begin position="25"/>
        <end position="46"/>
    </location>
</feature>
<feature type="compositionally biased region" description="Low complexity" evidence="2">
    <location>
        <begin position="48"/>
        <end position="61"/>
    </location>
</feature>
<keyword id="KW-0328">Glycosyltransferase</keyword>
<keyword id="KW-1185">Reference proteome</keyword>
<keyword id="KW-0808">Transferase</keyword>
<dbReference type="EC" id="2.4.1.14"/>
<dbReference type="EMBL" id="U33175">
    <property type="protein sequence ID" value="AAC49379.1"/>
    <property type="status" value="ALT_SEQ"/>
    <property type="molecule type" value="Genomic_DNA"/>
</dbReference>
<dbReference type="EMBL" id="CM000126">
    <property type="status" value="NOT_ANNOTATED_CDS"/>
    <property type="molecule type" value="Genomic_DNA"/>
</dbReference>
<dbReference type="PIR" id="JC4783">
    <property type="entry name" value="JC4783"/>
</dbReference>
<dbReference type="SMR" id="A2WYE9"/>
<dbReference type="STRING" id="39946.A2WYE9"/>
<dbReference type="CAZy" id="GT4">
    <property type="family name" value="Glycosyltransferase Family 4"/>
</dbReference>
<dbReference type="iPTMnet" id="A2WYE9"/>
<dbReference type="EnsemblPlants" id="OsLima_01g0043980.02">
    <property type="protein sequence ID" value="OsLima_01g0043980.02"/>
    <property type="gene ID" value="OsLima_01g0043980"/>
</dbReference>
<dbReference type="EnsemblPlants" id="OsLima_01g0043980.03">
    <property type="protein sequence ID" value="OsLima_01g0043980.03"/>
    <property type="gene ID" value="OsLima_01g0043980"/>
</dbReference>
<dbReference type="EnsemblPlants" id="OsLiXu_01g0044220.01">
    <property type="protein sequence ID" value="OsLiXu_01g0044220.01"/>
    <property type="gene ID" value="OsLiXu_01g0044220"/>
</dbReference>
<dbReference type="Gramene" id="OsLima_01g0043980.02">
    <property type="protein sequence ID" value="OsLima_01g0043980.02"/>
    <property type="gene ID" value="OsLima_01g0043980"/>
</dbReference>
<dbReference type="Gramene" id="OsLima_01g0043980.03">
    <property type="protein sequence ID" value="OsLima_01g0043980.03"/>
    <property type="gene ID" value="OsLima_01g0043980"/>
</dbReference>
<dbReference type="Gramene" id="OsLiXu_01g0044220.01">
    <property type="protein sequence ID" value="OsLiXu_01g0044220.01"/>
    <property type="gene ID" value="OsLiXu_01g0044220"/>
</dbReference>
<dbReference type="BioCyc" id="MetaCyc:MONOMER-1762"/>
<dbReference type="BRENDA" id="2.4.1.14">
    <property type="organism ID" value="4460"/>
</dbReference>
<dbReference type="UniPathway" id="UPA00371">
    <property type="reaction ID" value="UER00545"/>
</dbReference>
<dbReference type="Proteomes" id="UP000007015">
    <property type="component" value="Chromosome 1"/>
</dbReference>
<dbReference type="GO" id="GO:0046524">
    <property type="term" value="F:sucrose-phosphate synthase activity"/>
    <property type="evidence" value="ECO:0007669"/>
    <property type="project" value="UniProtKB-EC"/>
</dbReference>
<dbReference type="GO" id="GO:0005986">
    <property type="term" value="P:sucrose biosynthetic process"/>
    <property type="evidence" value="ECO:0007669"/>
    <property type="project" value="UniProtKB-UniPathway"/>
</dbReference>
<dbReference type="CDD" id="cd03800">
    <property type="entry name" value="GT4_sucrose_synthase"/>
    <property type="match status" value="1"/>
</dbReference>
<dbReference type="CDD" id="cd16419">
    <property type="entry name" value="HAD_SPS"/>
    <property type="match status" value="1"/>
</dbReference>
<dbReference type="Gene3D" id="3.40.50.2000">
    <property type="entry name" value="Glycogen Phosphorylase B"/>
    <property type="match status" value="2"/>
</dbReference>
<dbReference type="InterPro" id="IPR001296">
    <property type="entry name" value="Glyco_trans_1"/>
</dbReference>
<dbReference type="InterPro" id="IPR006380">
    <property type="entry name" value="SPP-like_dom"/>
</dbReference>
<dbReference type="InterPro" id="IPR044161">
    <property type="entry name" value="SPS"/>
</dbReference>
<dbReference type="InterPro" id="IPR035659">
    <property type="entry name" value="SPS_C"/>
</dbReference>
<dbReference type="InterPro" id="IPR012819">
    <property type="entry name" value="SPS_pln"/>
</dbReference>
<dbReference type="InterPro" id="IPR000368">
    <property type="entry name" value="Sucrose_synth_GT-B1"/>
</dbReference>
<dbReference type="NCBIfam" id="TIGR02468">
    <property type="entry name" value="sucrsPsyn_pln"/>
    <property type="match status" value="1"/>
</dbReference>
<dbReference type="PANTHER" id="PTHR46039">
    <property type="entry name" value="SUCROSE-PHOSPHATE SYNTHASE 3-RELATED"/>
    <property type="match status" value="1"/>
</dbReference>
<dbReference type="PANTHER" id="PTHR46039:SF5">
    <property type="entry name" value="SUCROSE-PHOSPHATE SYNTHASE 3-RELATED"/>
    <property type="match status" value="1"/>
</dbReference>
<dbReference type="Pfam" id="PF00534">
    <property type="entry name" value="Glycos_transf_1"/>
    <property type="match status" value="1"/>
</dbReference>
<dbReference type="Pfam" id="PF00862">
    <property type="entry name" value="GT-B_Sucrose_synth"/>
    <property type="match status" value="1"/>
</dbReference>
<dbReference type="Pfam" id="PF05116">
    <property type="entry name" value="S6PP"/>
    <property type="match status" value="1"/>
</dbReference>
<dbReference type="SUPFAM" id="SSF53756">
    <property type="entry name" value="UDP-Glycosyltransferase/glycogen phosphorylase"/>
    <property type="match status" value="1"/>
</dbReference>
<comment type="function">
    <text evidence="1">Plays a role in photosynthetic sucrose synthesis by catalyzing the rate-limiting step of sucrose biosynthesis from UDP-glucose and fructose- 6-phosphate. Involved in the regulation of carbon partitioning in the leaves of plants. May regulate the synthesis of sucrose and therefore play a major role as a limiting factor in the export of photoassimilates out of the leaf. Plays a role for sucrose availability that is essential for plant growth and fiber elongation (By similarity).</text>
</comment>
<comment type="catalytic activity">
    <reaction>
        <text>beta-D-fructose 6-phosphate + UDP-alpha-D-glucose = sucrose 6(F)-phosphate + UDP + H(+)</text>
        <dbReference type="Rhea" id="RHEA:22172"/>
        <dbReference type="ChEBI" id="CHEBI:15378"/>
        <dbReference type="ChEBI" id="CHEBI:57634"/>
        <dbReference type="ChEBI" id="CHEBI:57723"/>
        <dbReference type="ChEBI" id="CHEBI:58223"/>
        <dbReference type="ChEBI" id="CHEBI:58885"/>
        <dbReference type="EC" id="2.4.1.14"/>
    </reaction>
</comment>
<comment type="activity regulation">
    <text evidence="1">Activity is regulated by phosphorylation and moderated by concentration of metabolites and light.</text>
</comment>
<comment type="pathway">
    <text>Glycan biosynthesis; sucrose biosynthesis; sucrose from D-fructose 6-phosphate and UDP-alpha-D-glucose: step 1/2.</text>
</comment>
<comment type="subunit">
    <text evidence="1">Homodimer or homotetramer.</text>
</comment>
<comment type="tissue specificity">
    <text evidence="3 4">Expressed in leaves mesophyll cells, scutellum of germinating seedlings and pollen of immature inflorescences.</text>
</comment>
<comment type="similarity">
    <text evidence="5">Belongs to the glycosyltransferase 1 family.</text>
</comment>
<comment type="sequence caution" evidence="5">
    <conflict type="frameshift">
        <sequence resource="EMBL-CDS" id="AAC49379"/>
    </conflict>
</comment>
<comment type="sequence caution" evidence="5">
    <conflict type="miscellaneous discrepancy">
        <sequence resource="EMBL-CDS" id="AAC49379"/>
    </conflict>
    <text>Sequencing errors.</text>
</comment>